<accession>C4JQN4</accession>
<sequence>MVSNGHFASAGDDSFATSYEHGVQVVDEDKEFNRNLSKYLAYENVTPAGFNYHLISVFGSQSTGKSTLLNHLFGTHFSVMAETERRQTTKGIWMSKNKRQEPQRENSLPHVQNPNMADNILVMDVEGTDGRERGEDQDFERKSALFALATSEVLIVNIWEHQVGLYQGANMGLLKTVFEVNLQLFLKDKRSSPRSLLFFVIRDFLGTTPLQNLQNTLMQDLQRIWTSLSKPSGLEDSRIEDYFDFEFAALPHKNFQPDKFVAEVKKLTLRFREGHREPSKHNKTEGGIFLPEYHRRIPADGFAVYAEGIWDQIVNNKDLDLPTQQELLAQFRCDEISREVLVAFDEAIVPFETKQAEAAQSGNPEVLGGLGPAMKNARAKTVKGFETEASRYHKRVYQMKKAELEEKVDTRLKALFAGQLAAAHKSGISQFSDAVTAAVKAGQKKGASYDFADIVSKERKLALETFEKDAKATVVDGTSWSNYTQELALYQKDLEKISAQLRKDEMRRLATRVERWVRSRLGESVGLEFNALGSGRGGSGAPETGDKPSEDTIWDRIWSIFVDTVLDAERRFTERASSFDASLEEVDVGLWRLRRKAWGVLRSKIDEEMMEGNLLLKLRENFEDKFRYDAAGVPRIWRPTDDIEGLYTKARESTLTLIPLLSRFRLRETDTPPQLDRWVGYTPSSATPADEEDLAPIGGVDDDGMSLEEEMTMLSESKRQDLTVRFKKAADGVYVEAKRSAIGGMTQIPVYFYILLLALGWNEIVAVLRNPLYFFMLFLCAVGAFVTYQLNLWGPMIKMAEAASHQALEEGKKRLRDFLEPSEAGPHAARYKNSTEEYEMSNVKAPQRTNSGDDDDEDEGSW</sequence>
<dbReference type="EC" id="3.6.5.-" evidence="1"/>
<dbReference type="EMBL" id="CH476616">
    <property type="protein sequence ID" value="EEP78533.1"/>
    <property type="molecule type" value="Genomic_DNA"/>
</dbReference>
<dbReference type="RefSeq" id="XP_002543862.1">
    <property type="nucleotide sequence ID" value="XM_002543816.1"/>
</dbReference>
<dbReference type="SMR" id="C4JQN4"/>
<dbReference type="FunCoup" id="C4JQN4">
    <property type="interactions" value="60"/>
</dbReference>
<dbReference type="STRING" id="336963.C4JQN4"/>
<dbReference type="GeneID" id="8440218"/>
<dbReference type="KEGG" id="ure:UREG_03379"/>
<dbReference type="VEuPathDB" id="FungiDB:UREG_03379"/>
<dbReference type="eggNOG" id="KOG2203">
    <property type="taxonomic scope" value="Eukaryota"/>
</dbReference>
<dbReference type="HOGENOM" id="CLU_011270_0_0_1"/>
<dbReference type="InParanoid" id="C4JQN4"/>
<dbReference type="OMA" id="PIIKMTE"/>
<dbReference type="OrthoDB" id="1597724at2759"/>
<dbReference type="Proteomes" id="UP000002058">
    <property type="component" value="Unassembled WGS sequence"/>
</dbReference>
<dbReference type="GO" id="GO:0005789">
    <property type="term" value="C:endoplasmic reticulum membrane"/>
    <property type="evidence" value="ECO:0007669"/>
    <property type="project" value="UniProtKB-SubCell"/>
</dbReference>
<dbReference type="GO" id="GO:0005525">
    <property type="term" value="F:GTP binding"/>
    <property type="evidence" value="ECO:0007669"/>
    <property type="project" value="UniProtKB-UniRule"/>
</dbReference>
<dbReference type="GO" id="GO:0003924">
    <property type="term" value="F:GTPase activity"/>
    <property type="evidence" value="ECO:0007669"/>
    <property type="project" value="UniProtKB-UniRule"/>
</dbReference>
<dbReference type="GO" id="GO:0016320">
    <property type="term" value="P:endoplasmic reticulum membrane fusion"/>
    <property type="evidence" value="ECO:0007669"/>
    <property type="project" value="TreeGrafter"/>
</dbReference>
<dbReference type="CDD" id="cd01851">
    <property type="entry name" value="GBP"/>
    <property type="match status" value="1"/>
</dbReference>
<dbReference type="FunFam" id="3.40.50.300:FF:000727">
    <property type="entry name" value="Protein SEY1 homolog"/>
    <property type="match status" value="1"/>
</dbReference>
<dbReference type="Gene3D" id="3.40.50.300">
    <property type="entry name" value="P-loop containing nucleotide triphosphate hydrolases"/>
    <property type="match status" value="1"/>
</dbReference>
<dbReference type="HAMAP" id="MF_03109">
    <property type="entry name" value="Sey1"/>
    <property type="match status" value="1"/>
</dbReference>
<dbReference type="InterPro" id="IPR030386">
    <property type="entry name" value="G_GB1_RHD3_dom"/>
</dbReference>
<dbReference type="InterPro" id="IPR027417">
    <property type="entry name" value="P-loop_NTPase"/>
</dbReference>
<dbReference type="InterPro" id="IPR008803">
    <property type="entry name" value="RHD3/Sey1"/>
</dbReference>
<dbReference type="InterPro" id="IPR046758">
    <property type="entry name" value="Sey1/RHD3-like_3HB"/>
</dbReference>
<dbReference type="PANTHER" id="PTHR45923">
    <property type="entry name" value="PROTEIN SEY1"/>
    <property type="match status" value="1"/>
</dbReference>
<dbReference type="PANTHER" id="PTHR45923:SF2">
    <property type="entry name" value="PROTEIN SEY1"/>
    <property type="match status" value="1"/>
</dbReference>
<dbReference type="Pfam" id="PF05879">
    <property type="entry name" value="RHD3_GTPase"/>
    <property type="match status" value="1"/>
</dbReference>
<dbReference type="Pfam" id="PF20428">
    <property type="entry name" value="Sey1_3HB"/>
    <property type="match status" value="1"/>
</dbReference>
<dbReference type="SUPFAM" id="SSF52540">
    <property type="entry name" value="P-loop containing nucleoside triphosphate hydrolases"/>
    <property type="match status" value="1"/>
</dbReference>
<dbReference type="PROSITE" id="PS51715">
    <property type="entry name" value="G_GB1_RHD3"/>
    <property type="match status" value="1"/>
</dbReference>
<feature type="chain" id="PRO_0000385003" description="Protein SEY1">
    <location>
        <begin position="1"/>
        <end position="862"/>
    </location>
</feature>
<feature type="topological domain" description="Cytoplasmic" evidence="1">
    <location>
        <begin position="1"/>
        <end position="747"/>
    </location>
</feature>
<feature type="transmembrane region" description="Helical" evidence="1">
    <location>
        <begin position="748"/>
        <end position="768"/>
    </location>
</feature>
<feature type="topological domain" description="Lumenal" evidence="1">
    <location>
        <begin position="769"/>
        <end position="771"/>
    </location>
</feature>
<feature type="transmembrane region" description="Helical" evidence="1">
    <location>
        <begin position="772"/>
        <end position="792"/>
    </location>
</feature>
<feature type="topological domain" description="Cytoplasmic" evidence="1">
    <location>
        <begin position="793"/>
        <end position="862"/>
    </location>
</feature>
<feature type="domain" description="GB1/RHD3-type G" evidence="2">
    <location>
        <begin position="49"/>
        <end position="306"/>
    </location>
</feature>
<feature type="region of interest" description="Disordered" evidence="3">
    <location>
        <begin position="819"/>
        <end position="862"/>
    </location>
</feature>
<feature type="coiled-coil region" evidence="1">
    <location>
        <begin position="481"/>
        <end position="507"/>
    </location>
</feature>
<feature type="compositionally biased region" description="Acidic residues" evidence="3">
    <location>
        <begin position="852"/>
        <end position="862"/>
    </location>
</feature>
<feature type="binding site" evidence="1">
    <location>
        <begin position="59"/>
        <end position="66"/>
    </location>
    <ligand>
        <name>GTP</name>
        <dbReference type="ChEBI" id="CHEBI:37565"/>
    </ligand>
</feature>
<name>SEY1_UNCRE</name>
<evidence type="ECO:0000255" key="1">
    <source>
        <dbReference type="HAMAP-Rule" id="MF_03109"/>
    </source>
</evidence>
<evidence type="ECO:0000255" key="2">
    <source>
        <dbReference type="PROSITE-ProRule" id="PRU01052"/>
    </source>
</evidence>
<evidence type="ECO:0000256" key="3">
    <source>
        <dbReference type="SAM" id="MobiDB-lite"/>
    </source>
</evidence>
<keyword id="KW-0175">Coiled coil</keyword>
<keyword id="KW-0256">Endoplasmic reticulum</keyword>
<keyword id="KW-0342">GTP-binding</keyword>
<keyword id="KW-0378">Hydrolase</keyword>
<keyword id="KW-0472">Membrane</keyword>
<keyword id="KW-0547">Nucleotide-binding</keyword>
<keyword id="KW-1185">Reference proteome</keyword>
<keyword id="KW-0812">Transmembrane</keyword>
<keyword id="KW-1133">Transmembrane helix</keyword>
<gene>
    <name evidence="1" type="primary">SEY1</name>
    <name type="ORF">UREG_03379</name>
</gene>
<reference key="1">
    <citation type="journal article" date="2009" name="Genome Res.">
        <title>Comparative genomic analyses of the human fungal pathogens Coccidioides and their relatives.</title>
        <authorList>
            <person name="Sharpton T.J."/>
            <person name="Stajich J.E."/>
            <person name="Rounsley S.D."/>
            <person name="Gardner M.J."/>
            <person name="Wortman J.R."/>
            <person name="Jordar V.S."/>
            <person name="Maiti R."/>
            <person name="Kodira C.D."/>
            <person name="Neafsey D.E."/>
            <person name="Zeng Q."/>
            <person name="Hung C.-Y."/>
            <person name="McMahan C."/>
            <person name="Muszewska A."/>
            <person name="Grynberg M."/>
            <person name="Mandel M.A."/>
            <person name="Kellner E.M."/>
            <person name="Barker B.M."/>
            <person name="Galgiani J.N."/>
            <person name="Orbach M.J."/>
            <person name="Kirkland T.N."/>
            <person name="Cole G.T."/>
            <person name="Henn M.R."/>
            <person name="Birren B.W."/>
            <person name="Taylor J.W."/>
        </authorList>
    </citation>
    <scope>NUCLEOTIDE SEQUENCE [LARGE SCALE GENOMIC DNA]</scope>
    <source>
        <strain>UAMH 1704</strain>
    </source>
</reference>
<proteinExistence type="inferred from homology"/>
<organism>
    <name type="scientific">Uncinocarpus reesii (strain UAMH 1704)</name>
    <dbReference type="NCBI Taxonomy" id="336963"/>
    <lineage>
        <taxon>Eukaryota</taxon>
        <taxon>Fungi</taxon>
        <taxon>Dikarya</taxon>
        <taxon>Ascomycota</taxon>
        <taxon>Pezizomycotina</taxon>
        <taxon>Eurotiomycetes</taxon>
        <taxon>Eurotiomycetidae</taxon>
        <taxon>Onygenales</taxon>
        <taxon>Onygenaceae</taxon>
        <taxon>Uncinocarpus</taxon>
    </lineage>
</organism>
<protein>
    <recommendedName>
        <fullName evidence="1">Protein SEY1</fullName>
        <ecNumber evidence="1">3.6.5.-</ecNumber>
    </recommendedName>
</protein>
<comment type="function">
    <text evidence="1">Cooperates with the reticulon proteins and tubule-shaping DP1 family proteins to generate and maintain the structure of the tubular endoplasmic reticulum network. Has GTPase activity, which is required for its function in ER organization.</text>
</comment>
<comment type="subcellular location">
    <subcellularLocation>
        <location evidence="1">Endoplasmic reticulum membrane</location>
        <topology evidence="1">Multi-pass membrane protein</topology>
    </subcellularLocation>
    <text evidence="1">Enriched in the cortical ER. Concentrated in punctae along the ER tubules.</text>
</comment>
<comment type="similarity">
    <text evidence="2">Belongs to the TRAFAC class dynamin-like GTPase superfamily. GB1/RHD3 GTPase family. RHD3 subfamily.</text>
</comment>